<comment type="function">
    <text evidence="1">Isomerase that catalyzes the conversion of deoxy-ribose 1-phosphate (dRib-1-P) and ribose 1-phosphate (Rib-1-P) to deoxy-ribose 5-phosphate (dRib-5-P) and ribose 5-phosphate (Rib-5-P), respectively.</text>
</comment>
<comment type="catalytic activity">
    <reaction evidence="1">
        <text>2-deoxy-alpha-D-ribose 1-phosphate = 2-deoxy-D-ribose 5-phosphate</text>
        <dbReference type="Rhea" id="RHEA:27658"/>
        <dbReference type="ChEBI" id="CHEBI:57259"/>
        <dbReference type="ChEBI" id="CHEBI:62877"/>
        <dbReference type="EC" id="5.4.2.7"/>
    </reaction>
</comment>
<comment type="catalytic activity">
    <reaction evidence="1">
        <text>alpha-D-ribose 1-phosphate = D-ribose 5-phosphate</text>
        <dbReference type="Rhea" id="RHEA:18793"/>
        <dbReference type="ChEBI" id="CHEBI:57720"/>
        <dbReference type="ChEBI" id="CHEBI:78346"/>
        <dbReference type="EC" id="5.4.2.7"/>
    </reaction>
</comment>
<comment type="cofactor">
    <cofactor evidence="1">
        <name>Mn(2+)</name>
        <dbReference type="ChEBI" id="CHEBI:29035"/>
    </cofactor>
    <text evidence="1">Binds 2 manganese ions.</text>
</comment>
<comment type="pathway">
    <text evidence="1">Carbohydrate degradation; 2-deoxy-D-ribose 1-phosphate degradation; D-glyceraldehyde 3-phosphate and acetaldehyde from 2-deoxy-alpha-D-ribose 1-phosphate: step 1/2.</text>
</comment>
<comment type="subcellular location">
    <subcellularLocation>
        <location evidence="1">Cytoplasm</location>
    </subcellularLocation>
</comment>
<comment type="similarity">
    <text evidence="1">Belongs to the phosphopentomutase family.</text>
</comment>
<protein>
    <recommendedName>
        <fullName evidence="1">Phosphopentomutase</fullName>
        <ecNumber evidence="1">5.4.2.7</ecNumber>
    </recommendedName>
    <alternativeName>
        <fullName evidence="1">Phosphodeoxyribomutase</fullName>
    </alternativeName>
</protein>
<reference key="1">
    <citation type="journal article" date="2001" name="Science">
        <title>Comparative genomics of Listeria species.</title>
        <authorList>
            <person name="Glaser P."/>
            <person name="Frangeul L."/>
            <person name="Buchrieser C."/>
            <person name="Rusniok C."/>
            <person name="Amend A."/>
            <person name="Baquero F."/>
            <person name="Berche P."/>
            <person name="Bloecker H."/>
            <person name="Brandt P."/>
            <person name="Chakraborty T."/>
            <person name="Charbit A."/>
            <person name="Chetouani F."/>
            <person name="Couve E."/>
            <person name="de Daruvar A."/>
            <person name="Dehoux P."/>
            <person name="Domann E."/>
            <person name="Dominguez-Bernal G."/>
            <person name="Duchaud E."/>
            <person name="Durant L."/>
            <person name="Dussurget O."/>
            <person name="Entian K.-D."/>
            <person name="Fsihi H."/>
            <person name="Garcia-del Portillo F."/>
            <person name="Garrido P."/>
            <person name="Gautier L."/>
            <person name="Goebel W."/>
            <person name="Gomez-Lopez N."/>
            <person name="Hain T."/>
            <person name="Hauf J."/>
            <person name="Jackson D."/>
            <person name="Jones L.-M."/>
            <person name="Kaerst U."/>
            <person name="Kreft J."/>
            <person name="Kuhn M."/>
            <person name="Kunst F."/>
            <person name="Kurapkat G."/>
            <person name="Madueno E."/>
            <person name="Maitournam A."/>
            <person name="Mata Vicente J."/>
            <person name="Ng E."/>
            <person name="Nedjari H."/>
            <person name="Nordsiek G."/>
            <person name="Novella S."/>
            <person name="de Pablos B."/>
            <person name="Perez-Diaz J.-C."/>
            <person name="Purcell R."/>
            <person name="Remmel B."/>
            <person name="Rose M."/>
            <person name="Schlueter T."/>
            <person name="Simoes N."/>
            <person name="Tierrez A."/>
            <person name="Vazquez-Boland J.-A."/>
            <person name="Voss H."/>
            <person name="Wehland J."/>
            <person name="Cossart P."/>
        </authorList>
    </citation>
    <scope>NUCLEOTIDE SEQUENCE [LARGE SCALE GENOMIC DNA]</scope>
    <source>
        <strain>ATCC BAA-680 / CLIP 11262</strain>
    </source>
</reference>
<keyword id="KW-0963">Cytoplasm</keyword>
<keyword id="KW-0413">Isomerase</keyword>
<keyword id="KW-0464">Manganese</keyword>
<keyword id="KW-0479">Metal-binding</keyword>
<evidence type="ECO:0000255" key="1">
    <source>
        <dbReference type="HAMAP-Rule" id="MF_00740"/>
    </source>
</evidence>
<accession>Q92A54</accession>
<feature type="chain" id="PRO_0000199827" description="Phosphopentomutase">
    <location>
        <begin position="1"/>
        <end position="394"/>
    </location>
</feature>
<feature type="binding site" evidence="1">
    <location>
        <position position="14"/>
    </location>
    <ligand>
        <name>Mn(2+)</name>
        <dbReference type="ChEBI" id="CHEBI:29035"/>
        <label>1</label>
    </ligand>
</feature>
<feature type="binding site" evidence="1">
    <location>
        <position position="287"/>
    </location>
    <ligand>
        <name>Mn(2+)</name>
        <dbReference type="ChEBI" id="CHEBI:29035"/>
        <label>2</label>
    </ligand>
</feature>
<feature type="binding site" evidence="1">
    <location>
        <position position="292"/>
    </location>
    <ligand>
        <name>Mn(2+)</name>
        <dbReference type="ChEBI" id="CHEBI:29035"/>
        <label>2</label>
    </ligand>
</feature>
<feature type="binding site" evidence="1">
    <location>
        <position position="328"/>
    </location>
    <ligand>
        <name>Mn(2+)</name>
        <dbReference type="ChEBI" id="CHEBI:29035"/>
        <label>1</label>
    </ligand>
</feature>
<feature type="binding site" evidence="1">
    <location>
        <position position="329"/>
    </location>
    <ligand>
        <name>Mn(2+)</name>
        <dbReference type="ChEBI" id="CHEBI:29035"/>
        <label>1</label>
    </ligand>
</feature>
<feature type="binding site" evidence="1">
    <location>
        <position position="340"/>
    </location>
    <ligand>
        <name>Mn(2+)</name>
        <dbReference type="ChEBI" id="CHEBI:29035"/>
        <label>2</label>
    </ligand>
</feature>
<sequence length="394" mass="43747">MPDKFKRVHVIVMDSVGIGEAPDAAKFGDFDVDTFGHIAKHVGGLKMPEMGKLGLSNIREIEGIEKAEKPLAYYTKMQEASNGKDTMTGHWEIMGLYIDTPFRVFPDGFPDDLINQIEAKTGRKVIGNKPASGTEIMAELGEEHVKTGALIVYTSADSVLQIAAHEDVVPLEELYEICEFCREITLDDPYMLGRIIARPFVGEPGAFVRTPNRHDYALKPFKPTVMDALKDGGKDVIAIGKISDIFDGEGVTESIRTKSNMDGMDQFIDVLDKDFNGMSFLNLVDFDALFGHRRDPQGYADALVDFDGRLVEVMEKLTDDDLLIITADHGNDPTYTGTDHTREFVPLLVYSPRFKNGGSELELRQTFADLGATVADNFDVKMPEYGKSFLKDLK</sequence>
<proteinExistence type="inferred from homology"/>
<organism>
    <name type="scientific">Listeria innocua serovar 6a (strain ATCC BAA-680 / CLIP 11262)</name>
    <dbReference type="NCBI Taxonomy" id="272626"/>
    <lineage>
        <taxon>Bacteria</taxon>
        <taxon>Bacillati</taxon>
        <taxon>Bacillota</taxon>
        <taxon>Bacilli</taxon>
        <taxon>Bacillales</taxon>
        <taxon>Listeriaceae</taxon>
        <taxon>Listeria</taxon>
    </lineage>
</organism>
<name>DEOB_LISIN</name>
<dbReference type="EC" id="5.4.2.7" evidence="1"/>
<dbReference type="EMBL" id="AL596170">
    <property type="protein sequence ID" value="CAC97298.1"/>
    <property type="molecule type" value="Genomic_DNA"/>
</dbReference>
<dbReference type="PIR" id="AB1691">
    <property type="entry name" value="AB1691"/>
</dbReference>
<dbReference type="RefSeq" id="WP_003767605.1">
    <property type="nucleotide sequence ID" value="NC_003212.1"/>
</dbReference>
<dbReference type="SMR" id="Q92A54"/>
<dbReference type="STRING" id="272626.gene:17566426"/>
<dbReference type="GeneID" id="93235407"/>
<dbReference type="KEGG" id="lin:drm"/>
<dbReference type="eggNOG" id="COG1015">
    <property type="taxonomic scope" value="Bacteria"/>
</dbReference>
<dbReference type="HOGENOM" id="CLU_053861_0_0_9"/>
<dbReference type="OrthoDB" id="9769930at2"/>
<dbReference type="UniPathway" id="UPA00002">
    <property type="reaction ID" value="UER00467"/>
</dbReference>
<dbReference type="Proteomes" id="UP000002513">
    <property type="component" value="Chromosome"/>
</dbReference>
<dbReference type="GO" id="GO:0005829">
    <property type="term" value="C:cytosol"/>
    <property type="evidence" value="ECO:0007669"/>
    <property type="project" value="TreeGrafter"/>
</dbReference>
<dbReference type="GO" id="GO:0000287">
    <property type="term" value="F:magnesium ion binding"/>
    <property type="evidence" value="ECO:0007669"/>
    <property type="project" value="InterPro"/>
</dbReference>
<dbReference type="GO" id="GO:0030145">
    <property type="term" value="F:manganese ion binding"/>
    <property type="evidence" value="ECO:0007669"/>
    <property type="project" value="UniProtKB-UniRule"/>
</dbReference>
<dbReference type="GO" id="GO:0008973">
    <property type="term" value="F:phosphopentomutase activity"/>
    <property type="evidence" value="ECO:0007669"/>
    <property type="project" value="UniProtKB-UniRule"/>
</dbReference>
<dbReference type="GO" id="GO:0006018">
    <property type="term" value="P:2-deoxyribose 1-phosphate catabolic process"/>
    <property type="evidence" value="ECO:0007669"/>
    <property type="project" value="UniProtKB-UniRule"/>
</dbReference>
<dbReference type="GO" id="GO:0006015">
    <property type="term" value="P:5-phosphoribose 1-diphosphate biosynthetic process"/>
    <property type="evidence" value="ECO:0007669"/>
    <property type="project" value="UniProtKB-UniPathway"/>
</dbReference>
<dbReference type="GO" id="GO:0043094">
    <property type="term" value="P:metabolic compound salvage"/>
    <property type="evidence" value="ECO:0007669"/>
    <property type="project" value="InterPro"/>
</dbReference>
<dbReference type="GO" id="GO:0009117">
    <property type="term" value="P:nucleotide metabolic process"/>
    <property type="evidence" value="ECO:0007669"/>
    <property type="project" value="InterPro"/>
</dbReference>
<dbReference type="CDD" id="cd16009">
    <property type="entry name" value="PPM"/>
    <property type="match status" value="1"/>
</dbReference>
<dbReference type="FunFam" id="3.30.70.1250:FF:000001">
    <property type="entry name" value="Phosphopentomutase"/>
    <property type="match status" value="1"/>
</dbReference>
<dbReference type="Gene3D" id="3.40.720.10">
    <property type="entry name" value="Alkaline Phosphatase, subunit A"/>
    <property type="match status" value="1"/>
</dbReference>
<dbReference type="Gene3D" id="3.30.70.1250">
    <property type="entry name" value="Phosphopentomutase"/>
    <property type="match status" value="1"/>
</dbReference>
<dbReference type="HAMAP" id="MF_00740">
    <property type="entry name" value="Phosphopentomut"/>
    <property type="match status" value="1"/>
</dbReference>
<dbReference type="InterPro" id="IPR017850">
    <property type="entry name" value="Alkaline_phosphatase_core_sf"/>
</dbReference>
<dbReference type="InterPro" id="IPR010045">
    <property type="entry name" value="DeoB"/>
</dbReference>
<dbReference type="InterPro" id="IPR006124">
    <property type="entry name" value="Metalloenzyme"/>
</dbReference>
<dbReference type="InterPro" id="IPR024052">
    <property type="entry name" value="Phosphopentomutase_DeoB_cap_sf"/>
</dbReference>
<dbReference type="NCBIfam" id="TIGR01696">
    <property type="entry name" value="deoB"/>
    <property type="match status" value="1"/>
</dbReference>
<dbReference type="NCBIfam" id="NF003766">
    <property type="entry name" value="PRK05362.1"/>
    <property type="match status" value="1"/>
</dbReference>
<dbReference type="PANTHER" id="PTHR21110">
    <property type="entry name" value="PHOSPHOPENTOMUTASE"/>
    <property type="match status" value="1"/>
</dbReference>
<dbReference type="PANTHER" id="PTHR21110:SF0">
    <property type="entry name" value="PHOSPHOPENTOMUTASE"/>
    <property type="match status" value="1"/>
</dbReference>
<dbReference type="Pfam" id="PF01676">
    <property type="entry name" value="Metalloenzyme"/>
    <property type="match status" value="1"/>
</dbReference>
<dbReference type="PIRSF" id="PIRSF001491">
    <property type="entry name" value="Ppentomutase"/>
    <property type="match status" value="1"/>
</dbReference>
<dbReference type="SUPFAM" id="SSF53649">
    <property type="entry name" value="Alkaline phosphatase-like"/>
    <property type="match status" value="1"/>
</dbReference>
<dbReference type="SUPFAM" id="SSF143856">
    <property type="entry name" value="DeoB insert domain-like"/>
    <property type="match status" value="1"/>
</dbReference>
<gene>
    <name evidence="1" type="primary">deoB</name>
    <name type="synonym">drm</name>
    <name type="ordered locus">lin2068</name>
</gene>